<feature type="chain" id="PRO_0000201151" description="Protein PhoH">
    <location>
        <begin position="1"/>
        <end position="354"/>
    </location>
</feature>
<feature type="binding site" evidence="2">
    <location>
        <begin position="173"/>
        <end position="180"/>
    </location>
    <ligand>
        <name>ATP</name>
        <dbReference type="ChEBI" id="CHEBI:30616"/>
    </ligand>
</feature>
<accession>P0A9K2</accession>
<accession>P31544</accession>
<name>PHOH_ECO57</name>
<proteinExistence type="inferred from homology"/>
<comment type="subcellular location">
    <subcellularLocation>
        <location evidence="1">Cytoplasm</location>
    </subcellularLocation>
</comment>
<comment type="similarity">
    <text evidence="3">Belongs to the PhoH family.</text>
</comment>
<evidence type="ECO:0000250" key="1"/>
<evidence type="ECO:0000255" key="2"/>
<evidence type="ECO:0000305" key="3"/>
<organism>
    <name type="scientific">Escherichia coli O157:H7</name>
    <dbReference type="NCBI Taxonomy" id="83334"/>
    <lineage>
        <taxon>Bacteria</taxon>
        <taxon>Pseudomonadati</taxon>
        <taxon>Pseudomonadota</taxon>
        <taxon>Gammaproteobacteria</taxon>
        <taxon>Enterobacterales</taxon>
        <taxon>Enterobacteriaceae</taxon>
        <taxon>Escherichia</taxon>
    </lineage>
</organism>
<protein>
    <recommendedName>
        <fullName>Protein PhoH</fullName>
    </recommendedName>
    <alternativeName>
        <fullName>Phosphate starvation-inducible protein PsiH</fullName>
    </alternativeName>
</protein>
<dbReference type="EMBL" id="AE005174">
    <property type="protein sequence ID" value="AAG55638.1"/>
    <property type="molecule type" value="Genomic_DNA"/>
</dbReference>
<dbReference type="EMBL" id="BA000007">
    <property type="protein sequence ID" value="BAB34689.1"/>
    <property type="molecule type" value="Genomic_DNA"/>
</dbReference>
<dbReference type="PIR" id="B90787">
    <property type="entry name" value="B90787"/>
</dbReference>
<dbReference type="RefSeq" id="NP_309293.1">
    <property type="nucleotide sequence ID" value="NC_002695.1"/>
</dbReference>
<dbReference type="SMR" id="P0A9K2"/>
<dbReference type="STRING" id="155864.Z1522"/>
<dbReference type="GeneID" id="912858"/>
<dbReference type="KEGG" id="ece:Z1522"/>
<dbReference type="KEGG" id="ecs:ECs_1266"/>
<dbReference type="PATRIC" id="fig|386585.9.peg.1374"/>
<dbReference type="eggNOG" id="COG1702">
    <property type="taxonomic scope" value="Bacteria"/>
</dbReference>
<dbReference type="HOGENOM" id="CLU_051654_4_0_6"/>
<dbReference type="OMA" id="EAQNCTY"/>
<dbReference type="Proteomes" id="UP000000558">
    <property type="component" value="Chromosome"/>
</dbReference>
<dbReference type="Proteomes" id="UP000002519">
    <property type="component" value="Chromosome"/>
</dbReference>
<dbReference type="GO" id="GO:0005829">
    <property type="term" value="C:cytosol"/>
    <property type="evidence" value="ECO:0007669"/>
    <property type="project" value="TreeGrafter"/>
</dbReference>
<dbReference type="GO" id="GO:0005524">
    <property type="term" value="F:ATP binding"/>
    <property type="evidence" value="ECO:0007669"/>
    <property type="project" value="UniProtKB-KW"/>
</dbReference>
<dbReference type="FunFam" id="3.40.50.300:FF:000455">
    <property type="entry name" value="Phosphate starvation-inducible ATPase PhoH"/>
    <property type="match status" value="1"/>
</dbReference>
<dbReference type="Gene3D" id="3.40.50.300">
    <property type="entry name" value="P-loop containing nucleotide triphosphate hydrolases"/>
    <property type="match status" value="1"/>
</dbReference>
<dbReference type="InterPro" id="IPR027417">
    <property type="entry name" value="P-loop_NTPase"/>
</dbReference>
<dbReference type="InterPro" id="IPR003714">
    <property type="entry name" value="PhoH"/>
</dbReference>
<dbReference type="InterPro" id="IPR051451">
    <property type="entry name" value="PhoH2-like"/>
</dbReference>
<dbReference type="NCBIfam" id="NF007827">
    <property type="entry name" value="PRK10536.1"/>
    <property type="match status" value="1"/>
</dbReference>
<dbReference type="PANTHER" id="PTHR30473">
    <property type="entry name" value="PROTEIN PHOH"/>
    <property type="match status" value="1"/>
</dbReference>
<dbReference type="PANTHER" id="PTHR30473:SF3">
    <property type="entry name" value="PROTEIN PHOH"/>
    <property type="match status" value="1"/>
</dbReference>
<dbReference type="Pfam" id="PF02562">
    <property type="entry name" value="PhoH"/>
    <property type="match status" value="1"/>
</dbReference>
<dbReference type="SUPFAM" id="SSF52540">
    <property type="entry name" value="P-loop containing nucleoside triphosphate hydrolases"/>
    <property type="match status" value="1"/>
</dbReference>
<keyword id="KW-0067">ATP-binding</keyword>
<keyword id="KW-0963">Cytoplasm</keyword>
<keyword id="KW-0547">Nucleotide-binding</keyword>
<keyword id="KW-1185">Reference proteome</keyword>
<gene>
    <name type="primary">phoH</name>
    <name type="ordered locus">Z1522</name>
    <name type="ordered locus">ECs1266</name>
</gene>
<reference key="1">
    <citation type="journal article" date="2001" name="Nature">
        <title>Genome sequence of enterohaemorrhagic Escherichia coli O157:H7.</title>
        <authorList>
            <person name="Perna N.T."/>
            <person name="Plunkett G. III"/>
            <person name="Burland V."/>
            <person name="Mau B."/>
            <person name="Glasner J.D."/>
            <person name="Rose D.J."/>
            <person name="Mayhew G.F."/>
            <person name="Evans P.S."/>
            <person name="Gregor J."/>
            <person name="Kirkpatrick H.A."/>
            <person name="Posfai G."/>
            <person name="Hackett J."/>
            <person name="Klink S."/>
            <person name="Boutin A."/>
            <person name="Shao Y."/>
            <person name="Miller L."/>
            <person name="Grotbeck E.J."/>
            <person name="Davis N.W."/>
            <person name="Lim A."/>
            <person name="Dimalanta E.T."/>
            <person name="Potamousis K."/>
            <person name="Apodaca J."/>
            <person name="Anantharaman T.S."/>
            <person name="Lin J."/>
            <person name="Yen G."/>
            <person name="Schwartz D.C."/>
            <person name="Welch R.A."/>
            <person name="Blattner F.R."/>
        </authorList>
    </citation>
    <scope>NUCLEOTIDE SEQUENCE [LARGE SCALE GENOMIC DNA]</scope>
    <source>
        <strain>O157:H7 / EDL933 / ATCC 700927 / EHEC</strain>
    </source>
</reference>
<reference key="2">
    <citation type="journal article" date="2001" name="DNA Res.">
        <title>Complete genome sequence of enterohemorrhagic Escherichia coli O157:H7 and genomic comparison with a laboratory strain K-12.</title>
        <authorList>
            <person name="Hayashi T."/>
            <person name="Makino K."/>
            <person name="Ohnishi M."/>
            <person name="Kurokawa K."/>
            <person name="Ishii K."/>
            <person name="Yokoyama K."/>
            <person name="Han C.-G."/>
            <person name="Ohtsubo E."/>
            <person name="Nakayama K."/>
            <person name="Murata T."/>
            <person name="Tanaka M."/>
            <person name="Tobe T."/>
            <person name="Iida T."/>
            <person name="Takami H."/>
            <person name="Honda T."/>
            <person name="Sasakawa C."/>
            <person name="Ogasawara N."/>
            <person name="Yasunaga T."/>
            <person name="Kuhara S."/>
            <person name="Shiba T."/>
            <person name="Hattori M."/>
            <person name="Shinagawa H."/>
        </authorList>
    </citation>
    <scope>NUCLEOTIDE SEQUENCE [LARGE SCALE GENOMIC DNA]</scope>
    <source>
        <strain>O157:H7 / Sakai / RIMD 0509952 / EHEC</strain>
    </source>
</reference>
<sequence length="354" mass="39265">MVTSCTGHVLDNQRATTRGVFSSGSHLVTLHFQPHPFFSCVTDAVNGARSRFSAFYPKANYGLQGSQPSDVRAHNRAANGACDEYKQLKVLSMGRQKAVIKARREAKRVLRRDSRSHKQREEESVTSLVQMGGVEAIGMARDSRDTSPILARNEAQLHYLKAIESKQLIFATGEAGCGKTWISAAKAAEALIHKDVDRIIVTRPVLQADEDLGFLPGDIAEKFAPYFRPVYDVLVRRLGASFMQYCLRPEIGKVEIAPFAYMRGRTFENAVVILDEAQNVTAAQMKMFLTRLGENVTVIVNGDITQCDLPRGVCSGLSDALERFEEDEMVGIVRFGKEDCVRSALCQRTLHAYS</sequence>